<evidence type="ECO:0000255" key="1">
    <source>
        <dbReference type="HAMAP-Rule" id="MF_00009"/>
    </source>
</evidence>
<protein>
    <recommendedName>
        <fullName evidence="1">Endoribonuclease YbeY</fullName>
        <ecNumber evidence="1">3.1.-.-</ecNumber>
    </recommendedName>
</protein>
<organism>
    <name type="scientific">Mycoplasmoides gallisepticum (strain R(low / passage 15 / clone 2))</name>
    <name type="common">Mycoplasma gallisepticum</name>
    <dbReference type="NCBI Taxonomy" id="710127"/>
    <lineage>
        <taxon>Bacteria</taxon>
        <taxon>Bacillati</taxon>
        <taxon>Mycoplasmatota</taxon>
        <taxon>Mycoplasmoidales</taxon>
        <taxon>Mycoplasmoidaceae</taxon>
        <taxon>Mycoplasmoides</taxon>
    </lineage>
</organism>
<accession>Q7NB85</accession>
<sequence>MINHFDLKKVPPSIKEDFSEILKIINQCFSSHFKVKNNLFYELSFVSEKQSLQLNSSLRNKEYVADIISVCLWENAEIITPLLGEIFICSKKIAKDAIKYDVNFWYLLIRMIIHGLLHLLEFDHEQSDAYEYVTLTIQEQIVNKVIKTAKKKIWKNQELLSLLG</sequence>
<dbReference type="EC" id="3.1.-.-" evidence="1"/>
<dbReference type="EMBL" id="AE015450">
    <property type="protein sequence ID" value="AAP56744.2"/>
    <property type="molecule type" value="Genomic_DNA"/>
</dbReference>
<dbReference type="RefSeq" id="WP_011113640.1">
    <property type="nucleotide sequence ID" value="NC_004829.2"/>
</dbReference>
<dbReference type="SMR" id="Q7NB85"/>
<dbReference type="GeneID" id="93510223"/>
<dbReference type="KEGG" id="mga:MGA_0019"/>
<dbReference type="HOGENOM" id="CLU_1617184_0_0_14"/>
<dbReference type="OrthoDB" id="9807740at2"/>
<dbReference type="Proteomes" id="UP000001418">
    <property type="component" value="Chromosome"/>
</dbReference>
<dbReference type="GO" id="GO:0005737">
    <property type="term" value="C:cytoplasm"/>
    <property type="evidence" value="ECO:0007669"/>
    <property type="project" value="UniProtKB-SubCell"/>
</dbReference>
<dbReference type="GO" id="GO:0004222">
    <property type="term" value="F:metalloendopeptidase activity"/>
    <property type="evidence" value="ECO:0007669"/>
    <property type="project" value="InterPro"/>
</dbReference>
<dbReference type="GO" id="GO:0004521">
    <property type="term" value="F:RNA endonuclease activity"/>
    <property type="evidence" value="ECO:0007669"/>
    <property type="project" value="UniProtKB-UniRule"/>
</dbReference>
<dbReference type="GO" id="GO:0008270">
    <property type="term" value="F:zinc ion binding"/>
    <property type="evidence" value="ECO:0007669"/>
    <property type="project" value="UniProtKB-UniRule"/>
</dbReference>
<dbReference type="GO" id="GO:0006364">
    <property type="term" value="P:rRNA processing"/>
    <property type="evidence" value="ECO:0007669"/>
    <property type="project" value="UniProtKB-UniRule"/>
</dbReference>
<dbReference type="Gene3D" id="3.40.390.30">
    <property type="entry name" value="Metalloproteases ('zincins'), catalytic domain"/>
    <property type="match status" value="1"/>
</dbReference>
<dbReference type="HAMAP" id="MF_00009">
    <property type="entry name" value="Endoribonucl_YbeY"/>
    <property type="match status" value="1"/>
</dbReference>
<dbReference type="InterPro" id="IPR023091">
    <property type="entry name" value="MetalPrtase_cat_dom_sf_prd"/>
</dbReference>
<dbReference type="InterPro" id="IPR002036">
    <property type="entry name" value="YbeY"/>
</dbReference>
<dbReference type="NCBIfam" id="TIGR00043">
    <property type="entry name" value="rRNA maturation RNase YbeY"/>
    <property type="match status" value="1"/>
</dbReference>
<dbReference type="PANTHER" id="PTHR46986">
    <property type="entry name" value="ENDORIBONUCLEASE YBEY, CHLOROPLASTIC"/>
    <property type="match status" value="1"/>
</dbReference>
<dbReference type="PANTHER" id="PTHR46986:SF3">
    <property type="entry name" value="HALOACID DEHALOGENASE-LIKE HYDROLASE (HAD) FAMILY PROTEIN"/>
    <property type="match status" value="1"/>
</dbReference>
<dbReference type="Pfam" id="PF02130">
    <property type="entry name" value="YbeY"/>
    <property type="match status" value="1"/>
</dbReference>
<dbReference type="SUPFAM" id="SSF55486">
    <property type="entry name" value="Metalloproteases ('zincins'), catalytic domain"/>
    <property type="match status" value="1"/>
</dbReference>
<name>YBEY_MYCGA</name>
<keyword id="KW-0963">Cytoplasm</keyword>
<keyword id="KW-0255">Endonuclease</keyword>
<keyword id="KW-0378">Hydrolase</keyword>
<keyword id="KW-0479">Metal-binding</keyword>
<keyword id="KW-0540">Nuclease</keyword>
<keyword id="KW-1185">Reference proteome</keyword>
<keyword id="KW-0690">Ribosome biogenesis</keyword>
<keyword id="KW-0698">rRNA processing</keyword>
<keyword id="KW-0862">Zinc</keyword>
<feature type="chain" id="PRO_0000102486" description="Endoribonuclease YbeY">
    <location>
        <begin position="1"/>
        <end position="164"/>
    </location>
</feature>
<feature type="binding site" evidence="1">
    <location>
        <position position="114"/>
    </location>
    <ligand>
        <name>Zn(2+)</name>
        <dbReference type="ChEBI" id="CHEBI:29105"/>
        <note>catalytic</note>
    </ligand>
</feature>
<feature type="binding site" evidence="1">
    <location>
        <position position="118"/>
    </location>
    <ligand>
        <name>Zn(2+)</name>
        <dbReference type="ChEBI" id="CHEBI:29105"/>
        <note>catalytic</note>
    </ligand>
</feature>
<feature type="binding site" evidence="1">
    <location>
        <position position="124"/>
    </location>
    <ligand>
        <name>Zn(2+)</name>
        <dbReference type="ChEBI" id="CHEBI:29105"/>
        <note>catalytic</note>
    </ligand>
</feature>
<proteinExistence type="inferred from homology"/>
<comment type="function">
    <text evidence="1">Single strand-specific metallo-endoribonuclease involved in late-stage 70S ribosome quality control and in maturation of the 3' terminus of the 16S rRNA.</text>
</comment>
<comment type="cofactor">
    <cofactor evidence="1">
        <name>Zn(2+)</name>
        <dbReference type="ChEBI" id="CHEBI:29105"/>
    </cofactor>
    <text evidence="1">Binds 1 zinc ion.</text>
</comment>
<comment type="subcellular location">
    <subcellularLocation>
        <location evidence="1">Cytoplasm</location>
    </subcellularLocation>
</comment>
<comment type="similarity">
    <text evidence="1">Belongs to the endoribonuclease YbeY family.</text>
</comment>
<reference key="1">
    <citation type="journal article" date="2003" name="Microbiology">
        <title>The complete genome sequence of the avian pathogen Mycoplasma gallisepticum strain R(low).</title>
        <authorList>
            <person name="Papazisi L."/>
            <person name="Gorton T.S."/>
            <person name="Kutish G."/>
            <person name="Markham P.F."/>
            <person name="Browning G.F."/>
            <person name="Nguyen D.K."/>
            <person name="Swartzell S."/>
            <person name="Madan A."/>
            <person name="Mahairas G."/>
            <person name="Geary S.J."/>
        </authorList>
    </citation>
    <scope>NUCLEOTIDE SEQUENCE [LARGE SCALE GENOMIC DNA]</scope>
    <source>
        <strain>R(low / passage 15 / clone 2)</strain>
    </source>
</reference>
<gene>
    <name evidence="1" type="primary">ybeY</name>
    <name type="ordered locus">MYCGA3940</name>
    <name type="ORF">MGA_0019</name>
</gene>